<evidence type="ECO:0000255" key="1">
    <source>
        <dbReference type="HAMAP-Rule" id="MF_00540"/>
    </source>
</evidence>
<organism>
    <name type="scientific">Klebsiella pneumoniae subsp. pneumoniae (strain ATCC 700721 / MGH 78578)</name>
    <dbReference type="NCBI Taxonomy" id="272620"/>
    <lineage>
        <taxon>Bacteria</taxon>
        <taxon>Pseudomonadati</taxon>
        <taxon>Pseudomonadota</taxon>
        <taxon>Gammaproteobacteria</taxon>
        <taxon>Enterobacterales</taxon>
        <taxon>Enterobacteriaceae</taxon>
        <taxon>Klebsiella/Raoultella group</taxon>
        <taxon>Klebsiella</taxon>
        <taxon>Klebsiella pneumoniae complex</taxon>
    </lineage>
</organism>
<accession>A6T9W8</accession>
<feature type="chain" id="PRO_1000017664" description="Adenosine deaminase">
    <location>
        <begin position="1"/>
        <end position="333"/>
    </location>
</feature>
<feature type="active site" description="Proton donor" evidence="1">
    <location>
        <position position="200"/>
    </location>
</feature>
<feature type="binding site" evidence="1">
    <location>
        <position position="12"/>
    </location>
    <ligand>
        <name>Zn(2+)</name>
        <dbReference type="ChEBI" id="CHEBI:29105"/>
        <note>catalytic</note>
    </ligand>
</feature>
<feature type="binding site" evidence="1">
    <location>
        <position position="14"/>
    </location>
    <ligand>
        <name>substrate</name>
    </ligand>
</feature>
<feature type="binding site" evidence="1">
    <location>
        <position position="14"/>
    </location>
    <ligand>
        <name>Zn(2+)</name>
        <dbReference type="ChEBI" id="CHEBI:29105"/>
        <note>catalytic</note>
    </ligand>
</feature>
<feature type="binding site" evidence="1">
    <location>
        <position position="16"/>
    </location>
    <ligand>
        <name>substrate</name>
    </ligand>
</feature>
<feature type="binding site" evidence="1">
    <location>
        <position position="170"/>
    </location>
    <ligand>
        <name>substrate</name>
    </ligand>
</feature>
<feature type="binding site" evidence="1">
    <location>
        <position position="197"/>
    </location>
    <ligand>
        <name>Zn(2+)</name>
        <dbReference type="ChEBI" id="CHEBI:29105"/>
        <note>catalytic</note>
    </ligand>
</feature>
<feature type="binding site" evidence="1">
    <location>
        <position position="278"/>
    </location>
    <ligand>
        <name>Zn(2+)</name>
        <dbReference type="ChEBI" id="CHEBI:29105"/>
        <note>catalytic</note>
    </ligand>
</feature>
<feature type="binding site" evidence="1">
    <location>
        <position position="279"/>
    </location>
    <ligand>
        <name>substrate</name>
    </ligand>
</feature>
<feature type="site" description="Important for catalytic activity" evidence="1">
    <location>
        <position position="221"/>
    </location>
</feature>
<reference key="1">
    <citation type="submission" date="2006-09" db="EMBL/GenBank/DDBJ databases">
        <authorList>
            <consortium name="The Klebsiella pneumonia Genome Sequencing Project"/>
            <person name="McClelland M."/>
            <person name="Sanderson E.K."/>
            <person name="Spieth J."/>
            <person name="Clifton W.S."/>
            <person name="Latreille P."/>
            <person name="Sabo A."/>
            <person name="Pepin K."/>
            <person name="Bhonagiri V."/>
            <person name="Porwollik S."/>
            <person name="Ali J."/>
            <person name="Wilson R.K."/>
        </authorList>
    </citation>
    <scope>NUCLEOTIDE SEQUENCE [LARGE SCALE GENOMIC DNA]</scope>
    <source>
        <strain>ATCC 700721 / MGH 78578</strain>
    </source>
</reference>
<gene>
    <name evidence="1" type="primary">add</name>
    <name type="ordered locus">KPN78578_19280</name>
    <name type="ORF">KPN_01958</name>
</gene>
<protein>
    <recommendedName>
        <fullName evidence="1">Adenosine deaminase</fullName>
        <ecNumber evidence="1">3.5.4.4</ecNumber>
    </recommendedName>
    <alternativeName>
        <fullName evidence="1">Adenosine aminohydrolase</fullName>
    </alternativeName>
</protein>
<dbReference type="EC" id="3.5.4.4" evidence="1"/>
<dbReference type="EMBL" id="CP000647">
    <property type="protein sequence ID" value="ABR77389.1"/>
    <property type="molecule type" value="Genomic_DNA"/>
</dbReference>
<dbReference type="RefSeq" id="WP_004151209.1">
    <property type="nucleotide sequence ID" value="NC_009648.1"/>
</dbReference>
<dbReference type="SMR" id="A6T9W8"/>
<dbReference type="STRING" id="272620.KPN_01958"/>
<dbReference type="jPOST" id="A6T9W8"/>
<dbReference type="PaxDb" id="272620-KPN_01958"/>
<dbReference type="EnsemblBacteria" id="ABR77389">
    <property type="protein sequence ID" value="ABR77389"/>
    <property type="gene ID" value="KPN_01958"/>
</dbReference>
<dbReference type="KEGG" id="kpn:KPN_01958"/>
<dbReference type="HOGENOM" id="CLU_039228_0_2_6"/>
<dbReference type="Proteomes" id="UP000000265">
    <property type="component" value="Chromosome"/>
</dbReference>
<dbReference type="GO" id="GO:0005829">
    <property type="term" value="C:cytosol"/>
    <property type="evidence" value="ECO:0007669"/>
    <property type="project" value="TreeGrafter"/>
</dbReference>
<dbReference type="GO" id="GO:0046936">
    <property type="term" value="F:2'-deoxyadenosine deaminase activity"/>
    <property type="evidence" value="ECO:0007669"/>
    <property type="project" value="RHEA"/>
</dbReference>
<dbReference type="GO" id="GO:0004000">
    <property type="term" value="F:adenosine deaminase activity"/>
    <property type="evidence" value="ECO:0007669"/>
    <property type="project" value="UniProtKB-UniRule"/>
</dbReference>
<dbReference type="GO" id="GO:0008270">
    <property type="term" value="F:zinc ion binding"/>
    <property type="evidence" value="ECO:0007669"/>
    <property type="project" value="UniProtKB-UniRule"/>
</dbReference>
<dbReference type="GO" id="GO:0006154">
    <property type="term" value="P:adenosine catabolic process"/>
    <property type="evidence" value="ECO:0007669"/>
    <property type="project" value="TreeGrafter"/>
</dbReference>
<dbReference type="GO" id="GO:0043103">
    <property type="term" value="P:hypoxanthine salvage"/>
    <property type="evidence" value="ECO:0007669"/>
    <property type="project" value="TreeGrafter"/>
</dbReference>
<dbReference type="GO" id="GO:0046103">
    <property type="term" value="P:inosine biosynthetic process"/>
    <property type="evidence" value="ECO:0007669"/>
    <property type="project" value="TreeGrafter"/>
</dbReference>
<dbReference type="GO" id="GO:0009117">
    <property type="term" value="P:nucleotide metabolic process"/>
    <property type="evidence" value="ECO:0007669"/>
    <property type="project" value="UniProtKB-KW"/>
</dbReference>
<dbReference type="GO" id="GO:0009168">
    <property type="term" value="P:purine ribonucleoside monophosphate biosynthetic process"/>
    <property type="evidence" value="ECO:0007669"/>
    <property type="project" value="UniProtKB-UniRule"/>
</dbReference>
<dbReference type="CDD" id="cd01320">
    <property type="entry name" value="ADA"/>
    <property type="match status" value="1"/>
</dbReference>
<dbReference type="FunFam" id="3.20.20.140:FF:000009">
    <property type="entry name" value="Adenosine deaminase"/>
    <property type="match status" value="1"/>
</dbReference>
<dbReference type="Gene3D" id="3.20.20.140">
    <property type="entry name" value="Metal-dependent hydrolases"/>
    <property type="match status" value="1"/>
</dbReference>
<dbReference type="HAMAP" id="MF_00540">
    <property type="entry name" value="A_deaminase"/>
    <property type="match status" value="1"/>
</dbReference>
<dbReference type="InterPro" id="IPR006650">
    <property type="entry name" value="A/AMP_deam_AS"/>
</dbReference>
<dbReference type="InterPro" id="IPR028893">
    <property type="entry name" value="A_deaminase"/>
</dbReference>
<dbReference type="InterPro" id="IPR001365">
    <property type="entry name" value="A_deaminase_dom"/>
</dbReference>
<dbReference type="InterPro" id="IPR006330">
    <property type="entry name" value="Ado/ade_deaminase"/>
</dbReference>
<dbReference type="InterPro" id="IPR032466">
    <property type="entry name" value="Metal_Hydrolase"/>
</dbReference>
<dbReference type="NCBIfam" id="TIGR01430">
    <property type="entry name" value="aden_deam"/>
    <property type="match status" value="1"/>
</dbReference>
<dbReference type="NCBIfam" id="NF006846">
    <property type="entry name" value="PRK09358.1-1"/>
    <property type="match status" value="1"/>
</dbReference>
<dbReference type="PANTHER" id="PTHR11409">
    <property type="entry name" value="ADENOSINE DEAMINASE"/>
    <property type="match status" value="1"/>
</dbReference>
<dbReference type="PANTHER" id="PTHR11409:SF43">
    <property type="entry name" value="ADENOSINE DEAMINASE"/>
    <property type="match status" value="1"/>
</dbReference>
<dbReference type="Pfam" id="PF00962">
    <property type="entry name" value="A_deaminase"/>
    <property type="match status" value="1"/>
</dbReference>
<dbReference type="SUPFAM" id="SSF51556">
    <property type="entry name" value="Metallo-dependent hydrolases"/>
    <property type="match status" value="1"/>
</dbReference>
<dbReference type="PROSITE" id="PS00485">
    <property type="entry name" value="A_DEAMINASE"/>
    <property type="match status" value="1"/>
</dbReference>
<comment type="function">
    <text evidence="1">Catalyzes the hydrolytic deamination of adenosine and 2-deoxyadenosine.</text>
</comment>
<comment type="catalytic activity">
    <reaction evidence="1">
        <text>adenosine + H2O + H(+) = inosine + NH4(+)</text>
        <dbReference type="Rhea" id="RHEA:24408"/>
        <dbReference type="ChEBI" id="CHEBI:15377"/>
        <dbReference type="ChEBI" id="CHEBI:15378"/>
        <dbReference type="ChEBI" id="CHEBI:16335"/>
        <dbReference type="ChEBI" id="CHEBI:17596"/>
        <dbReference type="ChEBI" id="CHEBI:28938"/>
        <dbReference type="EC" id="3.5.4.4"/>
    </reaction>
    <physiologicalReaction direction="left-to-right" evidence="1">
        <dbReference type="Rhea" id="RHEA:24409"/>
    </physiologicalReaction>
</comment>
<comment type="catalytic activity">
    <reaction evidence="1">
        <text>2'-deoxyadenosine + H2O + H(+) = 2'-deoxyinosine + NH4(+)</text>
        <dbReference type="Rhea" id="RHEA:28190"/>
        <dbReference type="ChEBI" id="CHEBI:15377"/>
        <dbReference type="ChEBI" id="CHEBI:15378"/>
        <dbReference type="ChEBI" id="CHEBI:17256"/>
        <dbReference type="ChEBI" id="CHEBI:28938"/>
        <dbReference type="ChEBI" id="CHEBI:28997"/>
        <dbReference type="EC" id="3.5.4.4"/>
    </reaction>
    <physiologicalReaction direction="left-to-right" evidence="1">
        <dbReference type="Rhea" id="RHEA:28191"/>
    </physiologicalReaction>
</comment>
<comment type="cofactor">
    <cofactor evidence="1">
        <name>Zn(2+)</name>
        <dbReference type="ChEBI" id="CHEBI:29105"/>
    </cofactor>
    <text evidence="1">Binds 1 zinc ion per subunit.</text>
</comment>
<comment type="similarity">
    <text evidence="1">Belongs to the metallo-dependent hydrolases superfamily. Adenosine and AMP deaminases family. Adenosine deaminase subfamily.</text>
</comment>
<keyword id="KW-0378">Hydrolase</keyword>
<keyword id="KW-0479">Metal-binding</keyword>
<keyword id="KW-0546">Nucleotide metabolism</keyword>
<keyword id="KW-0862">Zinc</keyword>
<name>ADD_KLEP7</name>
<sequence>MIDSSLPLTDIHRHLDGNIRAQTILDLGREFNIALPATTLDTLRPHVQVTSLEPDLVSFLAKLDWGVKVLASLEACRRVAYENVEDAARNGLHYVELRFSPRYMAMTHRLPVDGVVEAVIAGVQEGCRDFQVDARLIGILSRTFGEAACQEELAALLAHREGITALDLAGDELGFPGTLFRNHFNQARDAGWHITVHAGEAAGPESIWQAIRELGAERIGHGVKAVEDPALMDYLAEHRIGIESCLTSNVQTSTVASLAQHPLKQFLEHGVLASLNTDDPAVQGVDIIHEYTVAAPAAGLSREQIRQAQINGLTLAFLGEQEKAALIQRVAKG</sequence>
<proteinExistence type="inferred from homology"/>